<name>RRAAH_RHOCS</name>
<feature type="chain" id="PRO_1000194869" description="Putative 4-hydroxy-4-methyl-2-oxoglutarate aldolase">
    <location>
        <begin position="1"/>
        <end position="160"/>
    </location>
</feature>
<feature type="binding site" evidence="1">
    <location>
        <begin position="75"/>
        <end position="78"/>
    </location>
    <ligand>
        <name>substrate</name>
    </ligand>
</feature>
<feature type="binding site" evidence="1">
    <location>
        <position position="97"/>
    </location>
    <ligand>
        <name>substrate</name>
    </ligand>
</feature>
<feature type="binding site" evidence="1">
    <location>
        <position position="98"/>
    </location>
    <ligand>
        <name>a divalent metal cation</name>
        <dbReference type="ChEBI" id="CHEBI:60240"/>
    </ligand>
</feature>
<gene>
    <name type="ordered locus">RC1_2349</name>
</gene>
<protein>
    <recommendedName>
        <fullName>Putative 4-hydroxy-4-methyl-2-oxoglutarate aldolase</fullName>
        <shortName>HMG aldolase</shortName>
        <ecNumber>4.1.3.17</ecNumber>
    </recommendedName>
    <alternativeName>
        <fullName>Oxaloacetate decarboxylase</fullName>
        <shortName>OAA decarboxylase</shortName>
        <ecNumber>4.1.1.112</ecNumber>
    </alternativeName>
    <alternativeName>
        <fullName>Regulator of ribonuclease activity homolog</fullName>
    </alternativeName>
    <alternativeName>
        <fullName>RraA-like protein</fullName>
    </alternativeName>
</protein>
<accession>B6IPN3</accession>
<organism>
    <name type="scientific">Rhodospirillum centenum (strain ATCC 51521 / SW)</name>
    <dbReference type="NCBI Taxonomy" id="414684"/>
    <lineage>
        <taxon>Bacteria</taxon>
        <taxon>Pseudomonadati</taxon>
        <taxon>Pseudomonadota</taxon>
        <taxon>Alphaproteobacteria</taxon>
        <taxon>Rhodospirillales</taxon>
        <taxon>Rhodospirillaceae</taxon>
        <taxon>Rhodospirillum</taxon>
    </lineage>
</organism>
<comment type="function">
    <text evidence="1">Catalyzes the aldol cleavage of 4-hydroxy-4-methyl-2-oxoglutarate (HMG) into 2 molecules of pyruvate. Also contains a secondary oxaloacetate (OAA) decarboxylase activity due to the common pyruvate enolate transition state formed following C-C bond cleavage in the retro-aldol and decarboxylation reactions (By similarity).</text>
</comment>
<comment type="catalytic activity">
    <reaction>
        <text>4-hydroxy-4-methyl-2-oxoglutarate = 2 pyruvate</text>
        <dbReference type="Rhea" id="RHEA:22748"/>
        <dbReference type="ChEBI" id="CHEBI:15361"/>
        <dbReference type="ChEBI" id="CHEBI:58276"/>
        <dbReference type="EC" id="4.1.3.17"/>
    </reaction>
</comment>
<comment type="catalytic activity">
    <reaction>
        <text>oxaloacetate + H(+) = pyruvate + CO2</text>
        <dbReference type="Rhea" id="RHEA:15641"/>
        <dbReference type="ChEBI" id="CHEBI:15361"/>
        <dbReference type="ChEBI" id="CHEBI:15378"/>
        <dbReference type="ChEBI" id="CHEBI:16452"/>
        <dbReference type="ChEBI" id="CHEBI:16526"/>
        <dbReference type="EC" id="4.1.1.112"/>
    </reaction>
</comment>
<comment type="cofactor">
    <cofactor evidence="1">
        <name>a divalent metal cation</name>
        <dbReference type="ChEBI" id="CHEBI:60240"/>
    </cofactor>
    <text evidence="1">Divalent metal cation.</text>
</comment>
<comment type="subunit">
    <text evidence="1">Homotrimer.</text>
</comment>
<comment type="similarity">
    <text evidence="2">Belongs to the class II aldolase/RraA-like family.</text>
</comment>
<keyword id="KW-0456">Lyase</keyword>
<keyword id="KW-0479">Metal-binding</keyword>
<keyword id="KW-1185">Reference proteome</keyword>
<proteinExistence type="inferred from homology"/>
<sequence length="160" mass="16577">MAIATADLFDSHEDILESCETQFRSYGGRAAFHGPIRTVRCHQDNALLKSLLSTPGDGAVLVVDGGGSLRTALVGDLIAGLGVKNGWAGIVVHGAIRDSEAIGGLDIGLKALGSNPRKSTKTGAGEADRPVAFGGCTFTPGHWLYSDADGVVVAPRRLHD</sequence>
<dbReference type="EC" id="4.1.3.17"/>
<dbReference type="EC" id="4.1.1.112"/>
<dbReference type="EMBL" id="CP000613">
    <property type="protein sequence ID" value="ACI99735.1"/>
    <property type="molecule type" value="Genomic_DNA"/>
</dbReference>
<dbReference type="RefSeq" id="WP_012567519.1">
    <property type="nucleotide sequence ID" value="NC_011420.2"/>
</dbReference>
<dbReference type="SMR" id="B6IPN3"/>
<dbReference type="STRING" id="414684.RC1_2349"/>
<dbReference type="KEGG" id="rce:RC1_2349"/>
<dbReference type="eggNOG" id="COG0684">
    <property type="taxonomic scope" value="Bacteria"/>
</dbReference>
<dbReference type="HOGENOM" id="CLU_072626_4_0_5"/>
<dbReference type="OrthoDB" id="9812532at2"/>
<dbReference type="Proteomes" id="UP000001591">
    <property type="component" value="Chromosome"/>
</dbReference>
<dbReference type="GO" id="GO:0047443">
    <property type="term" value="F:4-hydroxy-4-methyl-2-oxoglutarate aldolase activity"/>
    <property type="evidence" value="ECO:0007669"/>
    <property type="project" value="UniProtKB-EC"/>
</dbReference>
<dbReference type="GO" id="GO:0046872">
    <property type="term" value="F:metal ion binding"/>
    <property type="evidence" value="ECO:0007669"/>
    <property type="project" value="UniProtKB-KW"/>
</dbReference>
<dbReference type="GO" id="GO:0008948">
    <property type="term" value="F:oxaloacetate decarboxylase activity"/>
    <property type="evidence" value="ECO:0007669"/>
    <property type="project" value="UniProtKB-EC"/>
</dbReference>
<dbReference type="GO" id="GO:0008428">
    <property type="term" value="F:ribonuclease inhibitor activity"/>
    <property type="evidence" value="ECO:0007669"/>
    <property type="project" value="InterPro"/>
</dbReference>
<dbReference type="GO" id="GO:0051252">
    <property type="term" value="P:regulation of RNA metabolic process"/>
    <property type="evidence" value="ECO:0007669"/>
    <property type="project" value="InterPro"/>
</dbReference>
<dbReference type="CDD" id="cd16841">
    <property type="entry name" value="RraA_family"/>
    <property type="match status" value="1"/>
</dbReference>
<dbReference type="Gene3D" id="3.50.30.40">
    <property type="entry name" value="Ribonuclease E inhibitor RraA/RraA-like"/>
    <property type="match status" value="1"/>
</dbReference>
<dbReference type="InterPro" id="IPR010203">
    <property type="entry name" value="RraA"/>
</dbReference>
<dbReference type="InterPro" id="IPR005493">
    <property type="entry name" value="RraA/RraA-like"/>
</dbReference>
<dbReference type="InterPro" id="IPR036704">
    <property type="entry name" value="RraA/RraA-like_sf"/>
</dbReference>
<dbReference type="NCBIfam" id="TIGR01935">
    <property type="entry name" value="NOT-MenG"/>
    <property type="match status" value="1"/>
</dbReference>
<dbReference type="NCBIfam" id="NF006875">
    <property type="entry name" value="PRK09372.1"/>
    <property type="match status" value="1"/>
</dbReference>
<dbReference type="PANTHER" id="PTHR33254">
    <property type="entry name" value="4-HYDROXY-4-METHYL-2-OXOGLUTARATE ALDOLASE 3-RELATED"/>
    <property type="match status" value="1"/>
</dbReference>
<dbReference type="PANTHER" id="PTHR33254:SF4">
    <property type="entry name" value="4-HYDROXY-4-METHYL-2-OXOGLUTARATE ALDOLASE 3-RELATED"/>
    <property type="match status" value="1"/>
</dbReference>
<dbReference type="Pfam" id="PF03737">
    <property type="entry name" value="RraA-like"/>
    <property type="match status" value="1"/>
</dbReference>
<dbReference type="SUPFAM" id="SSF89562">
    <property type="entry name" value="RraA-like"/>
    <property type="match status" value="1"/>
</dbReference>
<evidence type="ECO:0000250" key="1"/>
<evidence type="ECO:0000305" key="2"/>
<reference key="1">
    <citation type="submission" date="2007-03" db="EMBL/GenBank/DDBJ databases">
        <title>Genome sequence of Rhodospirillum centenum.</title>
        <authorList>
            <person name="Touchman J.W."/>
            <person name="Bauer C."/>
            <person name="Blankenship R.E."/>
        </authorList>
    </citation>
    <scope>NUCLEOTIDE SEQUENCE [LARGE SCALE GENOMIC DNA]</scope>
    <source>
        <strain>ATCC 51521 / SW</strain>
    </source>
</reference>